<reference key="1">
    <citation type="journal article" date="2022" name="Chem. Sci.">
        <title>Macrophage-targeting oligopeptides from Mortierella alpina.</title>
        <authorList>
            <person name="Wurlitzer J.M."/>
            <person name="Stanisic A."/>
            <person name="Ziethe S."/>
            <person name="Jordan P.M."/>
            <person name="Guenther K."/>
            <person name="Werz O."/>
            <person name="Kries H."/>
            <person name="Gressler M."/>
        </authorList>
    </citation>
    <scope>NUCLEOTIDE SEQUENCE [GENOMIC DNA]</scope>
    <scope>FUNCTION</scope>
    <scope>DOMAIN</scope>
    <scope>CATALYTIC ACTIVITY</scope>
    <scope>SUBSTRATE SPECIFICITY</scope>
    <scope>BIOPHYSICOCHEMICAL PROPERTIES</scope>
    <scope>BIOTECHNOLOGY</scope>
    <source>
        <strain>M136</strain>
    </source>
</reference>
<reference key="2">
    <citation type="journal article" date="2019" name="Org. Lett.">
        <title>Fungal Biosurfactants from Mortierella alpina.</title>
        <authorList>
            <person name="Baldeweg F."/>
            <person name="Warncke P."/>
            <person name="Fischer D."/>
            <person name="Gressler M."/>
        </authorList>
    </citation>
    <scope>BIOTECHNOLOGY</scope>
</reference>
<gene>
    <name evidence="6" type="primary">malA</name>
    <name evidence="6" type="synonym">nps3</name>
</gene>
<proteinExistence type="evidence at protein level"/>
<evidence type="ECO:0000255" key="1"/>
<evidence type="ECO:0000255" key="2">
    <source>
        <dbReference type="PROSITE-ProRule" id="PRU00258"/>
    </source>
</evidence>
<evidence type="ECO:0000256" key="3">
    <source>
        <dbReference type="SAM" id="MobiDB-lite"/>
    </source>
</evidence>
<evidence type="ECO:0000269" key="4">
    <source>
    </source>
</evidence>
<evidence type="ECO:0000269" key="5">
    <source>
    </source>
</evidence>
<evidence type="ECO:0000303" key="6">
    <source>
    </source>
</evidence>
<evidence type="ECO:0000305" key="7"/>
<keyword id="KW-0436">Ligase</keyword>
<keyword id="KW-0596">Phosphopantetheine</keyword>
<keyword id="KW-0597">Phosphoprotein</keyword>
<sequence>MNNIDHQNCERTVAADASEYRQGIAKVNSDFDLKAEKSRLFENPELASPVYHPGSAAMSVDESGTPRSASPLSSYTGSPGETRHLGTELSRTLSGDTLSDPKEASSSVQDDVNEKGEDCLFGPSLFDAADAKAGPQSSVGDRFKAQAEYWRTALAGAPALLDLPTDRPRPSHPSFEGDRVPFELNSKTTRALKELSQQQGVTLFLTILSAWSAVLSRLSGQDDIVIGTPSSSRTSEVDSLNGSATKMLALRVDLSGKPNTQELLDRVRRTTLSAFTHQDLSFEQVVEILQPPRKMDHTPLFQVLYSWRNHENSSDLATDAAKFDLTLDMWESDNSIRGSLGYSTALFDRSSIERHVGYLQAMLLEMTTDSELPVALAEILSLDERTFLLETLNVTAENHSDSQHLHQLFEQQAERRPHAIAVVHESESLTYSELNTRANRLAHHLIHVGVQPDSVVAICVERSLALIVGILAILKSGGAYVPLDPVHASERLVGILSDAAPSVLVADACGMKALQGADLSQLKMVDPTSTLPTSAANPRVPNLEMHHLAYVIYTSGTTGKPKGVMVEHRQIARLFATSATQFDFSEQDTWCLLHSAAFDFSIWEMWGALRQGGKLVVVSQDVVRTPHDLHQLLQEHAVTVLNMTPTAFKPLLEIDTANKLQAALRYLFLGGEALSPAMLKPWLLPQAERCPKIINLYGPTEISIYVTYSKVTLEDCSQATSSIGGRLPDMRAYVFDDFMRPMPRGVVGELYVGGPGVARGYLNRPELTAERFLRNPFAAGRDERVYRTGDLVKQLPNGSLLYMGRNDHQVKIRGFRIELGEIETRLVEYPLVSEAVVIATGDDSNRRLVAYVTVRSDEQAPVAESSSTDQLASSLRAHLATQLPEYMVPSAFVRMDAFPMTPNGKLDVQALPAPRESDFARQAYVPPQGELETAIASIWSELLQMQRVSRDDSFFALGGHSLLAVQVISKLHALGHSVSASVLFESPTLSAFAHAIGQHRAIVVPPNLITSDVARITPEMLPLIDLTQTDIDHIVEQVPGGLANIQDIYALAPLQEGILFHHLMHKTGDPYLLYYGRAFDNRALLDQYLVGMQQMVSRHDILRTAFFWEDLSTPAQVVLRSATLSTTELTLDPADGSAIEQLKQRLDPRYNRLDLTQAPLLHYTIAQDFDGRWILGEWLHHLLGDHSTLEHIELEIRAIQEGRGAELLAPHPYRNLIAQTRLGVSQDAHEQFFKAMLSDFDTPSLPFGITDVRGDGSNITESTRMLPADLNERLRFQAKRLGVSLASLCHVAWAQVIARTSGQQRVVFGTVLFGRMQAETSSEGAIGLYINTLPFRVDVDSRSVEESVQETHALLAKLLEHEHAPLALAQRCSDVEPGVPLFSSLLNYRHNMESPEHGSGMEFLGEVERTNYPYDLSIEDYGHSLGLTAQVVLPLVSDRACGYMQEALDSLASALEYNPKMPVSQLDVLPADERKLLTRGGRWTQEDDSYHVCLHELFEQYADRVPNALSVMTDKHSLTYAEMNAESNRLAHRLIDLGAKTDSVMGLCMERSSSMIVAMFGILKSGAAYLPLDPSYTGERLKDIVSDAAPTILVTDAVGRKALGELVTATMVVLDMSDLKGGDTSNPQVPGLHSGNLAYMIYTSGSTGKPKGVMVEHKGVASLAQYHSELIGIHEGSRMLQFASISFDFSVWEIFLTLCSGATLVLAPSSIRMDRNMLWNYMMRQSVTHATFTPSFLQDGVDFPCAIEPLTLTLGGEALGPTLLQNLIQQGIAVFNDYGPTESSISAATWKGSADFNGDVVPIGRPVRNSRLYVLDSQQEPVPLGAVGELYISGVGLARGYLNRPEQTAERFLQNPFGDNKSARMYRTGDLVRYLPDGDLVYLGRTDYQVKIRGFRIELGEIEVRLAEHAMVSEAFVLALGEGINKRLVAYLTTDPEVQIEALDTTSLPSLLRSHLSARLPEYMVPAAFVCLDAFPLTSNGKLDRKALPAPSEDDYARQAYEAPEGEVENAIASIWSELLHVKRVSRHDSFFALGGHSLLAVQVISRLHRLGHSVSVRTLFESPTLLALAQSIGEHRAIVVPPNVITPGVTHITPEMLPLIDLNQNDIDRIVDQIPGGVANIQDIYALSPLQDGILFHNLMHKVGDPYLLYTARAFDNREVLDQYLAATQQIMDRHDILRTAFMWENLSVPAQVVLRNASLPVTELTLDPADGPIVQQLKRRLDPRHNRIDLTQAPLLRFTIAQDSDGRWILGELLHHLTGDHSTLEVIEAELLAIQEGRGAELLAAHPYRNLIAQARLGVSQAAHEKFFKEMLSDFDTPSLPFGIKEVRGDGSNVTESGLTLPSKLNERLRFQAKRLGVSVASLCHVAWAQVIARTSGQQQVVFGTVLFGRMQAETSSDRAIGLYINTLPLRVDVDDRSVEECVQLTHSLLAKLLEHEHASLALAQRCSSVQPGVPLFNSLLNYRHNMDTAQHASSASGMELLESLERTNYPFTISVEDYGTSLGLTAQVAQPLESGRACGYMQEALDSLTTALETSAGMSVSRLNILPTEERQLLTQGGSTQKHDDSYRICLHELFEQHVDRAPDALSIICGDQSLTYADLNAYSNRLAHRLIDTGVKADSIVALCMERSPSMIVAMLAILKAGAAYLPLDPLYPSDRLQGIVTDAEPAVLVADAVGRKALGELSSVHHIEVDIDGLQDGNASNPQVSNVDFTKLAYVIYTSGSTGKPKGVMLEHQGVSSLVQYHRELLRVCEGSRMLQFASISFDFSVWEIFIILCSGATLVLAPSSMRMDRDMLWRYMDEVSVSHAACTPSFLQDGADLPPLTSPLTLALGGEALSPALLQNLIRQGINVFNLYGPTETSIATATWNCPTNFCGDIVPIGGPVRNARHYILDSQQLPVPMGAIGELFIGGIGLARGYLNRPEQTAERFLKDPFSEDEGARVYRTGDLVRQLPDGNLVYLGRADFQVKIRGFRIELGEIEARLVEHESVSEAVVVALGEGVEARLVAYFTRDHDGKSEAFDKSLLPSILRSHLSARLPDYMVPSAFVRMEAFPLLASGKLDRRSLPAPSEEDYARQAYEAPQGAVEAAIASVWSELLNVNRVSRHDSFFALGGHSLLAVQVISRLHGLGHSVSVRALFESPTLSALAQSIGEHRAIVVPSNVITLDSIRITPEMLPLIDLTQDDIDHIVEQVPGGVANIQDIYALAPLQDGILFHHLMHKVGDPYILYSATAFDNRASVDQYLAATQQIVDRHDILRTAFMWENLSTPTQVVLRNAPLSITELFLDTSKGPVVQQLQKRSDPRFHRMDLTQAPLLRFTVAQEDDGRWIVSQLLHHLIGDHSTLEVIELEMKAIKEGRAADLLAPHPYRNLIAQARLGVTQDAHEKFFKEMLSDFDTPSLPFGITDVRGDGSNVTESERDLSAELNERLRFQAKRLGVSLASLCHVAWAQVIARTSGQQQVVFGTVLFGRMQAETSSGQAMGLYINTLPLRVDVDNRSVEESVQQTHSRLAKLLEHEHASLTLAQRCSDVPPGAPLFSSLLNYRHNAEMPERGSNISGKEEVDSRERTNYPFSISVEDYGTALGLTAQTVQPLDSDRACGYMQEALDSLASALEHNPKMPVAHLNVLPAEERTLLLDTWNDTAEDYPEHLCLHQLFEQQAERTPDTLAVVCEDKSLTYRELEARSNGLAHHLIQLGVRTDDIVAICVKRSVEMIVGILAVLKAGGAYVPLDPFFASDRLKDIMSDAAPVVLLADEAGRTALGKSAVSDVVVVDPTLFTTKADSPPRVADLSSQNLAYVIYTSGTTGKPKGVMVEHQGVVNLVVSQQPLLNISTSSRFTQFLSISFDPSVWETFATLSFGGVLHVLQEDVRRDFRQLWAYLQLNQITHAIFTPAVIQDCEGLPPLESMSTLLIGGEALSGALVRRVGDLVPNAAIINEYGPTEASIAALSWTYVEGGLIGDDIVPIGHPLSSKRVYILDEFGLPLPLGVAGELYLGGVGVARGYLNRPDLSAEKFVMDPFSREPGARMYKTGDMAKYHTDGRVICLGRNDDQIKIRGFRVELGEIEARLVEYPQVSEAAVVPLGKGGNMRLVAYVIARDEGEVEQHSDRSQSASSTELATSLRTHLLAKLPDYMVPSAFVRLSSFPVTTNGKLDRRALPAPNEDDYAREAYEAPQGEVETALASIWCELLQLKRVSRNDSFFALGGHSLLAVRLVNRVSTLGATVAISTLFASPSLSAFASRVQEQLAQEESSVMAITPVSRDNDLPLSFAQQRLWFLAQLGGVSDTYHMPLALRLQGQVNQVALESSLSELCNRHEALRSVFVTVNGQAHVKILPPGGLSIRKVDLRGAADQEIQLRQWMDKETHASFDLEQGPLVRASLIQTQDDECVLLITQHHIVSDGWSVGIMLRELSQLYTAFCSGESSPLSPLRIQYPDYAAWQRKWLSGDQLKSQSEYWRTALSGAPVLLDLPTDHPRPAHQSFKGDRVTIAWDADITRAVKQLSQRHGVTLFMTILSAWSAVLSHLSGQDDVVIGTPNANRNHPEIESLIGFFVNTLALRIDLSGKPTTQELLERVRRSTLAALNHQDLPFEQVVEAVQPPRKMDHTPLFQVMFAWQNNEDDDLELPGLQVTPCDLDYDAAKFDLTLSLWEEDSGIGGNLEYSTALFDRTTIERHVGYVHAMLLAMTTDDEQPVAAAEILSQDERTLLLETLNVTAESQSDKSCLHQLFEQRVESTPDAIAVVHDEQTLTYGELNARANRLAHHLIQLGVKPDSLVAICVDRSLPMLVGVLAILKAGGAYVPLDPVHASSRLLDILDDVQSSVVLVDARGTKALQGSDLSHMNVVDLREPLSGPTHNPQVMDLSSNHLAYVIYTSGSTGKPKGVMVEHRQVARLFTATSVWFDISEQDTWCLLHSFAFDFSVWEIWGAFLYGGKLVVVSQDIARSPQELYRTICEQAVTVLNMTPSAFKQLIDIHSGEQLDDSLRYVVFGGEALAPAILKPWFHTHAQDRPKVVNMYGITETTVHVTYRLMTPEDCSQTTSPIGVRIPDLRTYVLNDCGRPVPLGVMGELFVGGAGVTRGYLNRPDLTADRFIPDPFVEGHEGRMYKTGDLVKQLPDGSLVYMGRNDHQVKIRGFRIELGEIEARLTDHARVIEAVVIPLGDERNKRLVAYVSIREGEMSEEDGDDAESSFAERLASTLRTHLSTRLPEYMIPSAFVHMASFPLTPSGKLDMRALPAPSEDNVARQAYEAPEGEVETAIASIWSELLQIERVSRHDSFFALGGHSLLAVQVISKLHRVGHSVSVRALFEAPTLAVFAASIGHHQAIVIPPNVITPSTTSITPEMLPLIDLTQTDIDHVVEHVPGGVSNIQDIYSLSPLQDGILFHHLMAKSGDPYLLYVAMRFDTREALDQHLAGMQLIVNRHDILRTAFMWENLSSPAQVVWRNAPITVMEMNLDPSEGPILQQMKERFDPLHYKIDLTQAPVLRFAVAQDIDNQWILVRLLHHLVEDNSTLKVLHSELQMFAENSNAVLPPAEPYRNLIAQARLGMSQQAHEKFFKAMLEDIDTPSLPFGMANVHGEGADVIVSDRMLPQSLNDRLRLQAKRLGVTVASLCHVAWAQVIARTSGQQRVVFGTVLFGRMQAETSADQAMGLYINTLPIRVDIDGRSVEDSVQQTHSLLAKLLEHEHAPLTLAQRCSGIPAGGPLFSSLLNYRHSEDDDEEESGEEDMELLDFQERINYPFGISVEDLGTSLGLTAQVAAPLDSYRVCGYMQEAMESLANALESNPKMAVAQLDVLPAEERTLLLETWNNSAEEYPDSLCLHHMFEQQSERTPEAVAVVYGDRSLTYGELNARANGLARHLVHYGIQPDERVAICVKRSPEMLVGIMAILKVGGAYVPLDPLFASDRLKDIINDAAPRILLADEAGRAALGKSIVSGLTAVDPTLFGADLGASPRVAGLSCRNLAYVIYTSGTTGKPKGVLVEHQGVVNLLTSRQKHQLVQPSSNLTQFFSYSFDASILEIFGSLSFGGTLHILQEDVRLDFHQLWTYMEKHEITHAALTPAVLQNCEGLSPLVSMSTLIIGGESLSEGMVRKVSELMPNAAVVNEYGPTEATVATLSWKYSNEGMIGHDLVPVGRPLSNKRVYLLDDQSRPVPLGAVGELYIGGAGIARGYLNRPDLTAEKFLVDPFASESGATMYRTGDLAKYHPDGNVICLGRNDDQVKIRGFRVELGEIEARLSEHPQVSEAVVVPLGEGSLLRLVAYIIARTEDVLEQNIDTAEPMQLSSSLRSHLATRLPDYMVPSAFVCLSALPLTSNGKLDRRALPAPSDDDYAREAYEAPQGEVETALALIWCELLQLKRVSRNDSFFALGGHSLLAVQVISRLHRLGHSVSVRALFDSPTLSALAQSIGQHHAIVVPPNYITPGVTRITPEMLPLIDLSQMDIDHIAERVPGGVANIQDIYALSPLQDGILFHHLMQKSGDPYLFFTARSFDTRLSLDMHLSAMQQIVDRHDILRTSFVWEGLSAPAQVVWRTAPLSITELDLDPAQGSAVQQLQERFDPRNNRIDLSQAPLLRLAVAQELDGRWILMELLHHTIGDHSTLETTEIELREIQEGRGADLLVPHPYRNLIAQARLGVSQEAHEKFFKEMLEDFDTPSLPFGIADIFGDGSQVTECHRMLPQSLNDRLRAQAKRLGVSVASMCHVAWAQVIAQTSGQQRVVFGTVLFGRMQAETSSDQAMGLYINTLPFRVDVNNATVEEGVHQAQSLLAKLLEHEHASLTLAQSCSGIPAGSPLFSSLLNYRHNSAELLEEASNNSEMDILNSQERTNYPLGLSVEDFGTSLGLTAQAVLPLDPSRICGYMQEALDNLASALEFNPTMTVAQLDTVPAEEHNLLLQAFNDTAEEHPSSLCLHRMFEHQVERTPAAIAVVHEDQSLTYSELNVRANRLAHHLIQLGVQVETLVAICVKRSPEMLIAILAVLKAGGAYVPLDPLYASDRLREMVSDAAPSVLIADDAGRKALGGPFVATLTVVDPSTAFAGDCSDPHVGGLTSNSLAYVIYTSGTSGTPKGVMVEHQGVVSLVSSRQKQLLVEPTSRMTLFFSVSFDPSLLEIFGTLGFGGALHILGDHIRQDRHLLWKYLEHHRITHAILTPAMLQEFDDSSSLTDMQTLLIGGEALSVRLARKARKIVSNGAVINEYGPTEASIAALSWRYAEHVLHEHTPIGRPFSNRRVYLLDAEGTPVPLGAIGEIYLGGLGVARGYLNRPDLTAERFVADPFSGVSGARMYKTGDLGKFLPDGNVVCLGRNDHQIKIRGYRIELGEIETKLAEHEMVSEVVVVTSGSDADRQLVAYVVANHEHQMTREVDAADSSSLAQLAATLRSYLSARLPDYMVPAAFVRLDALPLTPNGKLDRHALPAPLSHAFATEDYEEPRGAIENILAGIWAELLNIDRVGRNDGFFVLGGYSLLAVRMISRVRAMLGLDLSLRTLFEAPTIAELAPRLLATGVTQDESYDVLLPIKPQGSRPPLFCVHPVTGLSWCFTGLSAHLDSDQPLYGLQARGLIDNGNMASSLDEMVVDYIDQIRRVQPHGPYYLLGYSFGGLVAHTMAAYLEKQGEQVALVALMDTPADYRTMAPEDKDEKQREQSLIQAFSKNRDLYSPEMINPVLRKALQTVNINNNKLGRLQAPRVTGGDLLIFRATVMEDEGRALLDPNAWKPYVQGSIEVCDVDCAHDFMDTPEATVVVSQVLNQKLRQSHCCLQREE</sequence>
<organism>
    <name type="scientific">Mortierella alpina</name>
    <name type="common">Oleaginous fungus</name>
    <name type="synonym">Mortierella renispora</name>
    <dbReference type="NCBI Taxonomy" id="64518"/>
    <lineage>
        <taxon>Eukaryota</taxon>
        <taxon>Fungi</taxon>
        <taxon>Fungi incertae sedis</taxon>
        <taxon>Mucoromycota</taxon>
        <taxon>Mortierellomycotina</taxon>
        <taxon>Mortierellomycetes</taxon>
        <taxon>Mortierellales</taxon>
        <taxon>Mortierellaceae</taxon>
        <taxon>Mortierella</taxon>
    </lineage>
</organism>
<dbReference type="EC" id="6.3.2.-" evidence="5"/>
<dbReference type="EMBL" id="MW984675">
    <property type="protein sequence ID" value="UUB73712.1"/>
    <property type="molecule type" value="Genomic_DNA"/>
</dbReference>
<dbReference type="SMR" id="P9WER8"/>
<dbReference type="GO" id="GO:0005737">
    <property type="term" value="C:cytoplasm"/>
    <property type="evidence" value="ECO:0007669"/>
    <property type="project" value="TreeGrafter"/>
</dbReference>
<dbReference type="GO" id="GO:0016874">
    <property type="term" value="F:ligase activity"/>
    <property type="evidence" value="ECO:0007669"/>
    <property type="project" value="UniProtKB-KW"/>
</dbReference>
<dbReference type="GO" id="GO:0031177">
    <property type="term" value="F:phosphopantetheine binding"/>
    <property type="evidence" value="ECO:0007669"/>
    <property type="project" value="InterPro"/>
</dbReference>
<dbReference type="GO" id="GO:0043041">
    <property type="term" value="P:amino acid activation for nonribosomal peptide biosynthetic process"/>
    <property type="evidence" value="ECO:0007669"/>
    <property type="project" value="TreeGrafter"/>
</dbReference>
<dbReference type="GO" id="GO:0044550">
    <property type="term" value="P:secondary metabolite biosynthetic process"/>
    <property type="evidence" value="ECO:0007669"/>
    <property type="project" value="TreeGrafter"/>
</dbReference>
<dbReference type="CDD" id="cd05930">
    <property type="entry name" value="A_NRPS"/>
    <property type="match status" value="5"/>
</dbReference>
<dbReference type="CDD" id="cd17643">
    <property type="entry name" value="A_NRPS_Cytc1-like"/>
    <property type="match status" value="2"/>
</dbReference>
<dbReference type="CDD" id="cd19544">
    <property type="entry name" value="E-C_NRPS"/>
    <property type="match status" value="5"/>
</dbReference>
<dbReference type="CDD" id="cd19531">
    <property type="entry name" value="LCL_NRPS-like"/>
    <property type="match status" value="2"/>
</dbReference>
<dbReference type="FunFam" id="3.30.300.30:FF:000010">
    <property type="entry name" value="Enterobactin synthetase component F"/>
    <property type="match status" value="5"/>
</dbReference>
<dbReference type="FunFam" id="3.40.50.980:FF:000002">
    <property type="entry name" value="Enterobactin synthetase component F"/>
    <property type="match status" value="1"/>
</dbReference>
<dbReference type="FunFam" id="1.10.1200.10:FF:000016">
    <property type="entry name" value="Non-ribosomal peptide synthase"/>
    <property type="match status" value="1"/>
</dbReference>
<dbReference type="FunFam" id="3.30.559.10:FF:000012">
    <property type="entry name" value="Non-ribosomal peptide synthetase"/>
    <property type="match status" value="1"/>
</dbReference>
<dbReference type="FunFam" id="3.30.559.30:FF:000001">
    <property type="entry name" value="Non-ribosomal peptide synthetase"/>
    <property type="match status" value="1"/>
</dbReference>
<dbReference type="FunFam" id="3.40.50.12780:FF:000012">
    <property type="entry name" value="Non-ribosomal peptide synthetase"/>
    <property type="match status" value="7"/>
</dbReference>
<dbReference type="FunFam" id="3.40.50.980:FF:000001">
    <property type="entry name" value="Non-ribosomal peptide synthetase"/>
    <property type="match status" value="7"/>
</dbReference>
<dbReference type="FunFam" id="2.30.38.10:FF:000001">
    <property type="entry name" value="Non-ribosomal peptide synthetase PvdI"/>
    <property type="match status" value="4"/>
</dbReference>
<dbReference type="FunFam" id="3.30.300.30:FF:000015">
    <property type="entry name" value="Nonribosomal peptide synthase SidD"/>
    <property type="match status" value="2"/>
</dbReference>
<dbReference type="FunFam" id="1.10.1200.10:FF:000005">
    <property type="entry name" value="Nonribosomal peptide synthetase 1"/>
    <property type="match status" value="6"/>
</dbReference>
<dbReference type="Gene3D" id="3.30.300.30">
    <property type="match status" value="7"/>
</dbReference>
<dbReference type="Gene3D" id="3.40.50.980">
    <property type="match status" value="10"/>
</dbReference>
<dbReference type="Gene3D" id="1.10.1200.10">
    <property type="entry name" value="ACP-like"/>
    <property type="match status" value="6"/>
</dbReference>
<dbReference type="Gene3D" id="3.40.50.1820">
    <property type="entry name" value="alpha/beta hydrolase"/>
    <property type="match status" value="1"/>
</dbReference>
<dbReference type="Gene3D" id="3.30.559.10">
    <property type="entry name" value="Chloramphenicol acetyltransferase-like domain"/>
    <property type="match status" value="6"/>
</dbReference>
<dbReference type="Gene3D" id="2.30.38.10">
    <property type="entry name" value="Luciferase, Domain 3"/>
    <property type="match status" value="5"/>
</dbReference>
<dbReference type="Gene3D" id="3.40.50.12780">
    <property type="entry name" value="N-terminal domain of ligase-like"/>
    <property type="match status" value="2"/>
</dbReference>
<dbReference type="Gene3D" id="3.30.559.30">
    <property type="entry name" value="Nonribosomal peptide synthetase, condensation domain"/>
    <property type="match status" value="7"/>
</dbReference>
<dbReference type="InterPro" id="IPR010071">
    <property type="entry name" value="AA_adenyl_dom"/>
</dbReference>
<dbReference type="InterPro" id="IPR029058">
    <property type="entry name" value="AB_hydrolase_fold"/>
</dbReference>
<dbReference type="InterPro" id="IPR036736">
    <property type="entry name" value="ACP-like_sf"/>
</dbReference>
<dbReference type="InterPro" id="IPR025110">
    <property type="entry name" value="AMP-bd_C"/>
</dbReference>
<dbReference type="InterPro" id="IPR045851">
    <property type="entry name" value="AMP-bd_C_sf"/>
</dbReference>
<dbReference type="InterPro" id="IPR020845">
    <property type="entry name" value="AMP-binding_CS"/>
</dbReference>
<dbReference type="InterPro" id="IPR000873">
    <property type="entry name" value="AMP-dep_synth/lig_dom"/>
</dbReference>
<dbReference type="InterPro" id="IPR042099">
    <property type="entry name" value="ANL_N_sf"/>
</dbReference>
<dbReference type="InterPro" id="IPR023213">
    <property type="entry name" value="CAT-like_dom_sf"/>
</dbReference>
<dbReference type="InterPro" id="IPR001242">
    <property type="entry name" value="Condensatn"/>
</dbReference>
<dbReference type="InterPro" id="IPR020806">
    <property type="entry name" value="PKS_PP-bd"/>
</dbReference>
<dbReference type="InterPro" id="IPR020802">
    <property type="entry name" value="PKS_thioesterase"/>
</dbReference>
<dbReference type="InterPro" id="IPR009081">
    <property type="entry name" value="PP-bd_ACP"/>
</dbReference>
<dbReference type="InterPro" id="IPR006162">
    <property type="entry name" value="Ppantetheine_attach_site"/>
</dbReference>
<dbReference type="InterPro" id="IPR001031">
    <property type="entry name" value="Thioesterase"/>
</dbReference>
<dbReference type="NCBIfam" id="TIGR01733">
    <property type="entry name" value="AA-adenyl-dom"/>
    <property type="match status" value="7"/>
</dbReference>
<dbReference type="NCBIfam" id="NF003417">
    <property type="entry name" value="PRK04813.1"/>
    <property type="match status" value="7"/>
</dbReference>
<dbReference type="NCBIfam" id="NF004282">
    <property type="entry name" value="PRK05691.1"/>
    <property type="match status" value="14"/>
</dbReference>
<dbReference type="PANTHER" id="PTHR45527:SF1">
    <property type="entry name" value="FATTY ACID SYNTHASE"/>
    <property type="match status" value="1"/>
</dbReference>
<dbReference type="PANTHER" id="PTHR45527">
    <property type="entry name" value="NONRIBOSOMAL PEPTIDE SYNTHETASE"/>
    <property type="match status" value="1"/>
</dbReference>
<dbReference type="Pfam" id="PF00501">
    <property type="entry name" value="AMP-binding"/>
    <property type="match status" value="7"/>
</dbReference>
<dbReference type="Pfam" id="PF13193">
    <property type="entry name" value="AMP-binding_C"/>
    <property type="match status" value="7"/>
</dbReference>
<dbReference type="Pfam" id="PF00668">
    <property type="entry name" value="Condensation"/>
    <property type="match status" value="7"/>
</dbReference>
<dbReference type="Pfam" id="PF00550">
    <property type="entry name" value="PP-binding"/>
    <property type="match status" value="7"/>
</dbReference>
<dbReference type="Pfam" id="PF00975">
    <property type="entry name" value="Thioesterase"/>
    <property type="match status" value="1"/>
</dbReference>
<dbReference type="SMART" id="SM00823">
    <property type="entry name" value="PKS_PP"/>
    <property type="match status" value="7"/>
</dbReference>
<dbReference type="SMART" id="SM00824">
    <property type="entry name" value="PKS_TE"/>
    <property type="match status" value="1"/>
</dbReference>
<dbReference type="SUPFAM" id="SSF56801">
    <property type="entry name" value="Acetyl-CoA synthetase-like"/>
    <property type="match status" value="7"/>
</dbReference>
<dbReference type="SUPFAM" id="SSF47336">
    <property type="entry name" value="ACP-like"/>
    <property type="match status" value="7"/>
</dbReference>
<dbReference type="SUPFAM" id="SSF53474">
    <property type="entry name" value="alpha/beta-Hydrolases"/>
    <property type="match status" value="1"/>
</dbReference>
<dbReference type="SUPFAM" id="SSF52777">
    <property type="entry name" value="CoA-dependent acyltransferases"/>
    <property type="match status" value="13"/>
</dbReference>
<dbReference type="PROSITE" id="PS00455">
    <property type="entry name" value="AMP_BINDING"/>
    <property type="match status" value="7"/>
</dbReference>
<dbReference type="PROSITE" id="PS50075">
    <property type="entry name" value="CARRIER"/>
    <property type="match status" value="7"/>
</dbReference>
<dbReference type="PROSITE" id="PS00012">
    <property type="entry name" value="PHOSPHOPANTETHEINE"/>
    <property type="match status" value="6"/>
</dbReference>
<feature type="chain" id="PRO_0000457095" description="Malpinin synthetase">
    <location>
        <begin position="1"/>
        <end position="7760"/>
    </location>
</feature>
<feature type="domain" description="Carrier 1" evidence="2">
    <location>
        <begin position="926"/>
        <end position="1000"/>
    </location>
</feature>
<feature type="domain" description="Carrier 2" evidence="2">
    <location>
        <begin position="2003"/>
        <end position="2077"/>
    </location>
</feature>
<feature type="domain" description="Carrier 3" evidence="2">
    <location>
        <begin position="3083"/>
        <end position="3157"/>
    </location>
</feature>
<feature type="domain" description="Carrier 4" evidence="2">
    <location>
        <begin position="4174"/>
        <end position="4248"/>
    </location>
</feature>
<feature type="domain" description="Carrier 5" evidence="2">
    <location>
        <begin position="5250"/>
        <end position="5324"/>
    </location>
</feature>
<feature type="domain" description="Carrier 6" evidence="2">
    <location>
        <begin position="6338"/>
        <end position="6412"/>
    </location>
</feature>
<feature type="domain" description="Carrier 7" evidence="2">
    <location>
        <begin position="7428"/>
        <end position="7503"/>
    </location>
</feature>
<feature type="region of interest" description="Disordered" evidence="3">
    <location>
        <begin position="42"/>
        <end position="115"/>
    </location>
</feature>
<feature type="region of interest" description="Condensation 1" evidence="1 5">
    <location>
        <begin position="87"/>
        <end position="389"/>
    </location>
</feature>
<feature type="region of interest" description="Disordered" evidence="3">
    <location>
        <begin position="161"/>
        <end position="180"/>
    </location>
</feature>
<feature type="region of interest" description="Adenylation 1" evidence="1 5">
    <location>
        <begin position="409"/>
        <end position="813"/>
    </location>
</feature>
<feature type="region of interest" description="Dual epimerase/condensation (E/C) domain 1" evidence="1 5">
    <location>
        <begin position="1046"/>
        <end position="1477"/>
    </location>
</feature>
<feature type="region of interest" description="Adenylation 2" evidence="1 5">
    <location>
        <begin position="1498"/>
        <end position="1893"/>
    </location>
</feature>
<feature type="region of interest" description="Dual epimerase/condensation (E/C) domain 2" evidence="1 5">
    <location>
        <begin position="2099"/>
        <end position="2558"/>
    </location>
</feature>
<feature type="region of interest" description="Adenylation 3" evidence="1 5">
    <location>
        <begin position="2578"/>
        <end position="2973"/>
    </location>
</feature>
<feature type="region of interest" description="Dual epimerase/condensation (E/C) domain 3" evidence="1 5">
    <location>
        <begin position="3203"/>
        <end position="3634"/>
    </location>
</feature>
<feature type="region of interest" description="Adenylation 4" evidence="1 5">
    <location>
        <begin position="3658"/>
        <end position="4057"/>
    </location>
</feature>
<feature type="region of interest" description="Condensation 2" evidence="1 5">
    <location>
        <begin position="4267"/>
        <end position="4705"/>
    </location>
</feature>
<feature type="region of interest" description="Adenylation 5" evidence="1 5">
    <location>
        <begin position="4729"/>
        <end position="5133"/>
    </location>
</feature>
<feature type="region of interest" description="Dual dehydration/condensation (C*) domain" evidence="1 5">
    <location>
        <begin position="5370"/>
        <end position="5804"/>
    </location>
</feature>
<feature type="region of interest" description="Adenylation 6" evidence="1 5">
    <location>
        <begin position="5825"/>
        <end position="6224"/>
    </location>
</feature>
<feature type="region of interest" description="Dual epimerase/condensation (E/C) domain 4" evidence="1 5">
    <location>
        <begin position="6458"/>
        <end position="6890"/>
    </location>
</feature>
<feature type="region of interest" description="Adenylation 7" evidence="1 5">
    <location>
        <begin position="6914"/>
        <end position="7300"/>
    </location>
</feature>
<feature type="region of interest" description="Thioesterase (TE) domain" evidence="1 5">
    <location>
        <begin position="7561"/>
        <end position="7722"/>
    </location>
</feature>
<feature type="compositionally biased region" description="Polar residues" evidence="3">
    <location>
        <begin position="65"/>
        <end position="79"/>
    </location>
</feature>
<feature type="compositionally biased region" description="Basic and acidic residues" evidence="3">
    <location>
        <begin position="164"/>
        <end position="180"/>
    </location>
</feature>
<feature type="modified residue" description="O-(pantetheine 4'-phosphoryl)serine" evidence="2">
    <location>
        <position position="961"/>
    </location>
</feature>
<feature type="modified residue" description="O-(pantetheine 4'-phosphoryl)serine" evidence="2">
    <location>
        <position position="2038"/>
    </location>
</feature>
<feature type="modified residue" description="O-(pantetheine 4'-phosphoryl)serine" evidence="2">
    <location>
        <position position="3118"/>
    </location>
</feature>
<feature type="modified residue" description="O-(pantetheine 4'-phosphoryl)serine" evidence="2">
    <location>
        <position position="4209"/>
    </location>
</feature>
<feature type="modified residue" description="O-(pantetheine 4'-phosphoryl)serine" evidence="2">
    <location>
        <position position="5285"/>
    </location>
</feature>
<feature type="modified residue" description="O-(pantetheine 4'-phosphoryl)serine" evidence="2">
    <location>
        <position position="6373"/>
    </location>
</feature>
<feature type="modified residue" description="O-(pantetheine 4'-phosphoryl)serine" evidence="2">
    <location>
        <position position="7463"/>
    </location>
</feature>
<name>MALA_MORAP</name>
<comment type="function">
    <text evidence="5">Heptamodular nonribosomal peptide synthetase that catalyzes the biosynthesis of malpinins, natural products that show biosurfactant activities (PubMed:36091214). Malpinins are acetylated hexapeptides (Ac-D-Leu/Val-D-Arg-D-Leu/Val-L-Phe/Leu-Dhb-D-Trp) containing a non-canonical amino acid derived from dehydration of L-Trp, (Z)-dehydrobutyrine (Dhb), at position 5, as well as a C-terminal D-amino acid, D-tryptophan, that can be oxidized to kynurenine (PubMed:36091214). Incorporated D-amino acids in positions 1, 3 and 4 are variable resulting in the malpinin A-congeners malpinin B to E (PubMed:36091214). Both modules M1 and M3 have relaxed specificity towards aliphatic amino acids (L-Leu &gt; L-Met &gt; L/D-Val &gt; L-Cys), explaining Val at position 1 and 3 in malpinin A-congeners malpinin B to D (PubMed:36091214). The incorporation of L-Leu, but not N-acetyl-L-Leu by module 1 suggests the N-terminal acetylation occurs at a later stage of biosynthesis (PubMed:36091214). Similar to M1 and M3, M4 has a broad substrate spectrum showing the highest activity with L-Phe followed by other hydrophobic amino acids (L-Phe &gt; L-Met = L-Trp) (PubMed:36091214). In contrast, M2, M5 and M6 are highly specific for L-Arg, L-Thr, and L-Trp, respectively (PubMed:36091214). Solely, M7 converted its preferred substrate (L-Phe) with a 15 000-fold reduced turnover rate compared to the most active module M6, indicating that its A domain cannot contribute to the malpinin biosynthesis due to low activity (PubMed:36091214). Since the last T domain in malA is apparently not loaded with an amino acid, either the TE domain must offload the oligopeptide from the preceding T domain or the dual E/C domain of M7 must transfer the final peptide chain to the free acceptor T domain of M7 prior to release (PubMed:36091214).</text>
</comment>
<comment type="biophysicochemical properties">
    <kinetics>
        <KM evidence="5">0.036 mM for L-Leu (for module 3)</KM>
        <KM evidence="5">0.46 mM for L-Val (for module 3)</KM>
        <KM evidence="5">4.3 mM for L-Met (for module 3)</KM>
        <text evidence="5">The kcat values of module 3 are 2.2 min(-1), 2.2 min(-1) and 2.0 min(-1) for L-Leu, L-Val and L-Met, respectively.</text>
    </kinetics>
</comment>
<comment type="domain">
    <text evidence="5">NRP synthetases are composed of discrete domains (adenylation (A), thiolation (T) or peptidyl carrier protein (PCP) and condensation (C) domains) which when grouped together are referred to as a single module. Each module is responsible for the recognition (via the A domain) and incorporation of a single amino acid into the growing peptide product. Thus, an NRP synthetase is generally composed of one or more modules and can terminate in a thioesterase domain (TE) that releases the newly synthesized peptide from the enzyme. Occasionally, epimerase (E) domains (responsible for L- to D-amino acid conversion) are present within the NRP synthetase. MalA is composed of 7 modules (M1 to M7) and contains bacterial-like dual epimerase/condensation domains allowing the racemization of enzyme-tethered L-amino acids and the subsequent incorporation of D-amino acids into the metabolites. The C domain of M6 acts as a dual dehydration/condensation domain (marked as C*). The C domain of M1 is truncated and lacks the essential C1-C4 core motifs at its N-terminal region including the highly conserved tandem His-His motif in the active site of C3. Moreover, the final adenylation domain (in M7) is inactive and offloading occurs either by the final dual E/C domain or the C-terminal T or TE domain. MalA has the following architecture: C-A-T-E/C-A-T-E/C-A-T-E/C-A-T-C-A-T-C*-A-T-E/C-A-T-TE.</text>
</comment>
<comment type="biotechnology">
    <text evidence="4 5">Mortierella alpina biosurfactants may have an enormous potential for various applications in pharmacy, health care, food, cosmetics, or textiles since they offer a highly biocompatible and biodegradable alternative for synthetic surfactants in formulations (PubMed:30789272). Moreover, malpinin conjugates can penetrate mammalian cell membranes via an phagocytosis-mediated mechanism, suggesting Mortierella oligopeptides as carrier peptides for directed cell targeting (PubMed:36091214).</text>
</comment>
<comment type="similarity">
    <text evidence="7">Belongs to the NRP synthetase family.</text>
</comment>
<accession>P9WER8</accession>
<protein>
    <recommendedName>
        <fullName evidence="6">Malpinin synthetase</fullName>
        <ecNumber evidence="5">6.3.2.-</ecNumber>
    </recommendedName>
    <alternativeName>
        <fullName evidence="6">Nonribosomal peptide synthetase 3</fullName>
    </alternativeName>
</protein>